<reference key="1">
    <citation type="submission" date="2006-08" db="EMBL/GenBank/DDBJ databases">
        <title>Complete sequence of Shewanella sp. MR-4.</title>
        <authorList>
            <consortium name="US DOE Joint Genome Institute"/>
            <person name="Copeland A."/>
            <person name="Lucas S."/>
            <person name="Lapidus A."/>
            <person name="Barry K."/>
            <person name="Detter J.C."/>
            <person name="Glavina del Rio T."/>
            <person name="Hammon N."/>
            <person name="Israni S."/>
            <person name="Dalin E."/>
            <person name="Tice H."/>
            <person name="Pitluck S."/>
            <person name="Kiss H."/>
            <person name="Brettin T."/>
            <person name="Bruce D."/>
            <person name="Han C."/>
            <person name="Tapia R."/>
            <person name="Gilna P."/>
            <person name="Schmutz J."/>
            <person name="Larimer F."/>
            <person name="Land M."/>
            <person name="Hauser L."/>
            <person name="Kyrpides N."/>
            <person name="Mikhailova N."/>
            <person name="Nealson K."/>
            <person name="Konstantinidis K."/>
            <person name="Klappenbach J."/>
            <person name="Tiedje J."/>
            <person name="Richardson P."/>
        </authorList>
    </citation>
    <scope>NUCLEOTIDE SEQUENCE [LARGE SCALE GENOMIC DNA]</scope>
    <source>
        <strain>MR-4</strain>
    </source>
</reference>
<gene>
    <name evidence="1" type="primary">groES</name>
    <name evidence="1" type="synonym">groS</name>
    <name type="ordered locus">Shewmr4_3398</name>
</gene>
<accession>Q0HEQ3</accession>
<comment type="function">
    <text evidence="1">Together with the chaperonin GroEL, plays an essential role in assisting protein folding. The GroEL-GroES system forms a nano-cage that allows encapsulation of the non-native substrate proteins and provides a physical environment optimized to promote and accelerate protein folding. GroES binds to the apical surface of the GroEL ring, thereby capping the opening of the GroEL channel.</text>
</comment>
<comment type="subunit">
    <text evidence="1">Heptamer of 7 subunits arranged in a ring. Interacts with the chaperonin GroEL.</text>
</comment>
<comment type="subcellular location">
    <subcellularLocation>
        <location evidence="1">Cytoplasm</location>
    </subcellularLocation>
</comment>
<comment type="similarity">
    <text evidence="1">Belongs to the GroES chaperonin family.</text>
</comment>
<feature type="chain" id="PRO_1000025366" description="Co-chaperonin GroES">
    <location>
        <begin position="1"/>
        <end position="96"/>
    </location>
</feature>
<dbReference type="EMBL" id="CP000446">
    <property type="protein sequence ID" value="ABI40464.1"/>
    <property type="molecule type" value="Genomic_DNA"/>
</dbReference>
<dbReference type="RefSeq" id="WP_011071021.1">
    <property type="nucleotide sequence ID" value="NC_008321.1"/>
</dbReference>
<dbReference type="SMR" id="Q0HEQ3"/>
<dbReference type="KEGG" id="she:Shewmr4_3398"/>
<dbReference type="HOGENOM" id="CLU_132825_1_1_6"/>
<dbReference type="GO" id="GO:0005737">
    <property type="term" value="C:cytoplasm"/>
    <property type="evidence" value="ECO:0007669"/>
    <property type="project" value="UniProtKB-SubCell"/>
</dbReference>
<dbReference type="GO" id="GO:0005524">
    <property type="term" value="F:ATP binding"/>
    <property type="evidence" value="ECO:0007669"/>
    <property type="project" value="InterPro"/>
</dbReference>
<dbReference type="GO" id="GO:0046872">
    <property type="term" value="F:metal ion binding"/>
    <property type="evidence" value="ECO:0007669"/>
    <property type="project" value="TreeGrafter"/>
</dbReference>
<dbReference type="GO" id="GO:0044183">
    <property type="term" value="F:protein folding chaperone"/>
    <property type="evidence" value="ECO:0007669"/>
    <property type="project" value="InterPro"/>
</dbReference>
<dbReference type="GO" id="GO:0051087">
    <property type="term" value="F:protein-folding chaperone binding"/>
    <property type="evidence" value="ECO:0007669"/>
    <property type="project" value="TreeGrafter"/>
</dbReference>
<dbReference type="GO" id="GO:0051082">
    <property type="term" value="F:unfolded protein binding"/>
    <property type="evidence" value="ECO:0007669"/>
    <property type="project" value="TreeGrafter"/>
</dbReference>
<dbReference type="GO" id="GO:0051085">
    <property type="term" value="P:chaperone cofactor-dependent protein refolding"/>
    <property type="evidence" value="ECO:0007669"/>
    <property type="project" value="TreeGrafter"/>
</dbReference>
<dbReference type="CDD" id="cd00320">
    <property type="entry name" value="cpn10"/>
    <property type="match status" value="1"/>
</dbReference>
<dbReference type="FunFam" id="2.30.33.40:FF:000001">
    <property type="entry name" value="10 kDa chaperonin"/>
    <property type="match status" value="1"/>
</dbReference>
<dbReference type="Gene3D" id="2.30.33.40">
    <property type="entry name" value="GroES chaperonin"/>
    <property type="match status" value="1"/>
</dbReference>
<dbReference type="HAMAP" id="MF_00580">
    <property type="entry name" value="CH10"/>
    <property type="match status" value="1"/>
</dbReference>
<dbReference type="InterPro" id="IPR020818">
    <property type="entry name" value="Chaperonin_GroES"/>
</dbReference>
<dbReference type="InterPro" id="IPR037124">
    <property type="entry name" value="Chaperonin_GroES_sf"/>
</dbReference>
<dbReference type="InterPro" id="IPR018369">
    <property type="entry name" value="Chaprnonin_Cpn10_CS"/>
</dbReference>
<dbReference type="InterPro" id="IPR011032">
    <property type="entry name" value="GroES-like_sf"/>
</dbReference>
<dbReference type="NCBIfam" id="NF001526">
    <property type="entry name" value="PRK00364.1-1"/>
    <property type="match status" value="1"/>
</dbReference>
<dbReference type="NCBIfam" id="NF001527">
    <property type="entry name" value="PRK00364.1-2"/>
    <property type="match status" value="1"/>
</dbReference>
<dbReference type="NCBIfam" id="NF001531">
    <property type="entry name" value="PRK00364.2-2"/>
    <property type="match status" value="1"/>
</dbReference>
<dbReference type="PANTHER" id="PTHR10772">
    <property type="entry name" value="10 KDA HEAT SHOCK PROTEIN"/>
    <property type="match status" value="1"/>
</dbReference>
<dbReference type="PANTHER" id="PTHR10772:SF58">
    <property type="entry name" value="CO-CHAPERONIN GROES"/>
    <property type="match status" value="1"/>
</dbReference>
<dbReference type="Pfam" id="PF00166">
    <property type="entry name" value="Cpn10"/>
    <property type="match status" value="1"/>
</dbReference>
<dbReference type="PRINTS" id="PR00297">
    <property type="entry name" value="CHAPERONIN10"/>
</dbReference>
<dbReference type="SMART" id="SM00883">
    <property type="entry name" value="Cpn10"/>
    <property type="match status" value="1"/>
</dbReference>
<dbReference type="SUPFAM" id="SSF50129">
    <property type="entry name" value="GroES-like"/>
    <property type="match status" value="1"/>
</dbReference>
<dbReference type="PROSITE" id="PS00681">
    <property type="entry name" value="CHAPERONINS_CPN10"/>
    <property type="match status" value="1"/>
</dbReference>
<sequence>MNIRPLHDRVIVKRLEVESTSAGGIVLTGSAAEKSTRGEVLAVGNGRILENGTVRPLDVKVGDVVIFNEGYGVKKEKIDGQEVLILSEADLMAIVG</sequence>
<organism>
    <name type="scientific">Shewanella sp. (strain MR-4)</name>
    <dbReference type="NCBI Taxonomy" id="60480"/>
    <lineage>
        <taxon>Bacteria</taxon>
        <taxon>Pseudomonadati</taxon>
        <taxon>Pseudomonadota</taxon>
        <taxon>Gammaproteobacteria</taxon>
        <taxon>Alteromonadales</taxon>
        <taxon>Shewanellaceae</taxon>
        <taxon>Shewanella</taxon>
    </lineage>
</organism>
<protein>
    <recommendedName>
        <fullName evidence="1">Co-chaperonin GroES</fullName>
    </recommendedName>
    <alternativeName>
        <fullName evidence="1">10 kDa chaperonin</fullName>
    </alternativeName>
    <alternativeName>
        <fullName evidence="1">Chaperonin-10</fullName>
        <shortName evidence="1">Cpn10</shortName>
    </alternativeName>
</protein>
<evidence type="ECO:0000255" key="1">
    <source>
        <dbReference type="HAMAP-Rule" id="MF_00580"/>
    </source>
</evidence>
<proteinExistence type="inferred from homology"/>
<name>CH10_SHESM</name>
<keyword id="KW-0143">Chaperone</keyword>
<keyword id="KW-0963">Cytoplasm</keyword>